<gene>
    <name type="primary">ITGB1BP2</name>
</gene>
<keyword id="KW-0479">Metal-binding</keyword>
<keyword id="KW-1185">Reference proteome</keyword>
<keyword id="KW-0677">Repeat</keyword>
<keyword id="KW-0729">SH3-binding</keyword>
<keyword id="KW-0862">Zinc</keyword>
<sequence>MSLLCHNKGCGQHFDPQTNLPDSCCHHPGVPVFHDALKGWSCCRKRTVDFSEFLNIKGCTVGPHCAEKLPEAPQPEGPATSSSLLEQKPPNTIPKSAETLRRERPKSDLPPKLLPLNISQALEMALEQKELDQEPGAGLDSSLIQTGASCQNPGCDAVYQGSESDATPCTYHPGAPRFHEGMKSWSCCGIQTLDFGVFLAQPGCRVGRHDWGKKLLASCRHDWHQTDSLVVVTVYGQIPLPAFNWVEASQTELHIHIVFDGNRVFQAQVKLWGVVNVEQSSVSLMPSRVEISLVKADPGFWAQLEHPDALAEKSKSGVGLEMDEEESEDSDDDLSWTEEEEEAMGE</sequence>
<accession>Q462R2</accession>
<feature type="chain" id="PRO_0000084269" description="Integrin beta-1-binding protein 2">
    <location>
        <begin position="1"/>
        <end position="346"/>
    </location>
</feature>
<feature type="domain" description="CHORD 1" evidence="4">
    <location>
        <begin position="5"/>
        <end position="64"/>
    </location>
</feature>
<feature type="domain" description="CHORD 2" evidence="4">
    <location>
        <begin position="150"/>
        <end position="209"/>
    </location>
</feature>
<feature type="domain" description="CS" evidence="3">
    <location>
        <begin position="216"/>
        <end position="305"/>
    </location>
</feature>
<feature type="region of interest" description="Disordered" evidence="5">
    <location>
        <begin position="70"/>
        <end position="113"/>
    </location>
</feature>
<feature type="region of interest" description="Disordered" evidence="5">
    <location>
        <begin position="311"/>
        <end position="346"/>
    </location>
</feature>
<feature type="short sequence motif" description="SH3-binding" evidence="2">
    <location>
        <begin position="28"/>
        <end position="31"/>
    </location>
</feature>
<feature type="short sequence motif" description="SH3-binding" evidence="2">
    <location>
        <begin position="70"/>
        <end position="78"/>
    </location>
</feature>
<feature type="short sequence motif" description="SH2-binding" evidence="2">
    <location>
        <begin position="159"/>
        <end position="162"/>
    </location>
</feature>
<feature type="short sequence motif" description="SH3-binding" evidence="2">
    <location>
        <begin position="173"/>
        <end position="176"/>
    </location>
</feature>
<feature type="short sequence motif" description="SH2-binding" evidence="2">
    <location>
        <begin position="235"/>
        <end position="238"/>
    </location>
</feature>
<feature type="compositionally biased region" description="Polar residues" evidence="5">
    <location>
        <begin position="79"/>
        <end position="94"/>
    </location>
</feature>
<feature type="compositionally biased region" description="Basic and acidic residues" evidence="5">
    <location>
        <begin position="98"/>
        <end position="109"/>
    </location>
</feature>
<feature type="compositionally biased region" description="Acidic residues" evidence="5">
    <location>
        <begin position="321"/>
        <end position="346"/>
    </location>
</feature>
<feature type="binding site" evidence="4">
    <location>
        <position position="5"/>
    </location>
    <ligand>
        <name>Zn(2+)</name>
        <dbReference type="ChEBI" id="CHEBI:29105"/>
        <label>1</label>
    </ligand>
</feature>
<feature type="binding site" evidence="4">
    <location>
        <position position="10"/>
    </location>
    <ligand>
        <name>Zn(2+)</name>
        <dbReference type="ChEBI" id="CHEBI:29105"/>
        <label>1</label>
    </ligand>
</feature>
<feature type="binding site" evidence="4">
    <location>
        <position position="24"/>
    </location>
    <ligand>
        <name>Zn(2+)</name>
        <dbReference type="ChEBI" id="CHEBI:29105"/>
        <label>1</label>
    </ligand>
</feature>
<feature type="binding site" evidence="4">
    <location>
        <position position="27"/>
    </location>
    <ligand>
        <name>Zn(2+)</name>
        <dbReference type="ChEBI" id="CHEBI:29105"/>
        <label>2</label>
    </ligand>
</feature>
<feature type="binding site" evidence="4">
    <location>
        <position position="42"/>
    </location>
    <ligand>
        <name>Zn(2+)</name>
        <dbReference type="ChEBI" id="CHEBI:29105"/>
        <label>2</label>
    </ligand>
</feature>
<feature type="binding site" evidence="4">
    <location>
        <position position="43"/>
    </location>
    <ligand>
        <name>Zn(2+)</name>
        <dbReference type="ChEBI" id="CHEBI:29105"/>
        <label>2</label>
    </ligand>
</feature>
<feature type="binding site" evidence="4">
    <location>
        <position position="59"/>
    </location>
    <ligand>
        <name>Zn(2+)</name>
        <dbReference type="ChEBI" id="CHEBI:29105"/>
        <label>2</label>
    </ligand>
</feature>
<feature type="binding site" evidence="4">
    <location>
        <position position="64"/>
    </location>
    <ligand>
        <name>Zn(2+)</name>
        <dbReference type="ChEBI" id="CHEBI:29105"/>
        <label>1</label>
    </ligand>
</feature>
<feature type="binding site" evidence="4">
    <location>
        <position position="150"/>
    </location>
    <ligand>
        <name>Zn(2+)</name>
        <dbReference type="ChEBI" id="CHEBI:29105"/>
        <label>3</label>
    </ligand>
</feature>
<feature type="binding site" evidence="4">
    <location>
        <position position="155"/>
    </location>
    <ligand>
        <name>Zn(2+)</name>
        <dbReference type="ChEBI" id="CHEBI:29105"/>
        <label>3</label>
    </ligand>
</feature>
<feature type="binding site" evidence="4">
    <location>
        <position position="169"/>
    </location>
    <ligand>
        <name>Zn(2+)</name>
        <dbReference type="ChEBI" id="CHEBI:29105"/>
        <label>3</label>
    </ligand>
</feature>
<feature type="binding site" evidence="4">
    <location>
        <position position="172"/>
    </location>
    <ligand>
        <name>Zn(2+)</name>
        <dbReference type="ChEBI" id="CHEBI:29105"/>
        <label>4</label>
    </ligand>
</feature>
<feature type="binding site" evidence="4">
    <location>
        <position position="187"/>
    </location>
    <ligand>
        <name>Zn(2+)</name>
        <dbReference type="ChEBI" id="CHEBI:29105"/>
        <label>4</label>
    </ligand>
</feature>
<feature type="binding site" evidence="4">
    <location>
        <position position="188"/>
    </location>
    <ligand>
        <name>Zn(2+)</name>
        <dbReference type="ChEBI" id="CHEBI:29105"/>
        <label>4</label>
    </ligand>
</feature>
<feature type="binding site" evidence="4">
    <location>
        <position position="204"/>
    </location>
    <ligand>
        <name>Zn(2+)</name>
        <dbReference type="ChEBI" id="CHEBI:29105"/>
        <label>4</label>
    </ligand>
</feature>
<feature type="binding site" evidence="4">
    <location>
        <position position="209"/>
    </location>
    <ligand>
        <name>Zn(2+)</name>
        <dbReference type="ChEBI" id="CHEBI:29105"/>
        <label>3</label>
    </ligand>
</feature>
<evidence type="ECO:0000250" key="1"/>
<evidence type="ECO:0000255" key="2"/>
<evidence type="ECO:0000255" key="3">
    <source>
        <dbReference type="PROSITE-ProRule" id="PRU00547"/>
    </source>
</evidence>
<evidence type="ECO:0000255" key="4">
    <source>
        <dbReference type="PROSITE-ProRule" id="PRU00734"/>
    </source>
</evidence>
<evidence type="ECO:0000256" key="5">
    <source>
        <dbReference type="SAM" id="MobiDB-lite"/>
    </source>
</evidence>
<dbReference type="EMBL" id="DQ002920">
    <property type="protein sequence ID" value="AAY57557.1"/>
    <property type="molecule type" value="mRNA"/>
</dbReference>
<dbReference type="RefSeq" id="NP_001028181.1">
    <property type="nucleotide sequence ID" value="NM_001033009.3"/>
</dbReference>
<dbReference type="SMR" id="Q462R2"/>
<dbReference type="FunCoup" id="Q462R2">
    <property type="interactions" value="313"/>
</dbReference>
<dbReference type="STRING" id="9823.ENSSSCP00000023164"/>
<dbReference type="PaxDb" id="9823-ENSSSCP00000023164"/>
<dbReference type="PeptideAtlas" id="Q462R2"/>
<dbReference type="GeneID" id="613129"/>
<dbReference type="KEGG" id="ssc:613129"/>
<dbReference type="CTD" id="26548"/>
<dbReference type="eggNOG" id="KOG1667">
    <property type="taxonomic scope" value="Eukaryota"/>
</dbReference>
<dbReference type="InParanoid" id="Q462R2"/>
<dbReference type="OrthoDB" id="10261079at2759"/>
<dbReference type="Proteomes" id="UP000008227">
    <property type="component" value="Unplaced"/>
</dbReference>
<dbReference type="Proteomes" id="UP000314985">
    <property type="component" value="Unplaced"/>
</dbReference>
<dbReference type="Proteomes" id="UP000694570">
    <property type="component" value="Unplaced"/>
</dbReference>
<dbReference type="Proteomes" id="UP000694571">
    <property type="component" value="Unplaced"/>
</dbReference>
<dbReference type="Proteomes" id="UP000694720">
    <property type="component" value="Unplaced"/>
</dbReference>
<dbReference type="Proteomes" id="UP000694722">
    <property type="component" value="Unplaced"/>
</dbReference>
<dbReference type="Proteomes" id="UP000694723">
    <property type="component" value="Unplaced"/>
</dbReference>
<dbReference type="Proteomes" id="UP000694724">
    <property type="component" value="Unplaced"/>
</dbReference>
<dbReference type="Proteomes" id="UP000694725">
    <property type="component" value="Unplaced"/>
</dbReference>
<dbReference type="Proteomes" id="UP000694726">
    <property type="component" value="Unplaced"/>
</dbReference>
<dbReference type="Proteomes" id="UP000694727">
    <property type="component" value="Unplaced"/>
</dbReference>
<dbReference type="Proteomes" id="UP000694728">
    <property type="component" value="Unplaced"/>
</dbReference>
<dbReference type="GO" id="GO:0030018">
    <property type="term" value="C:Z disc"/>
    <property type="evidence" value="ECO:0000318"/>
    <property type="project" value="GO_Central"/>
</dbReference>
<dbReference type="GO" id="GO:0017124">
    <property type="term" value="F:SH3 domain binding"/>
    <property type="evidence" value="ECO:0007669"/>
    <property type="project" value="UniProtKB-KW"/>
</dbReference>
<dbReference type="GO" id="GO:0008270">
    <property type="term" value="F:zinc ion binding"/>
    <property type="evidence" value="ECO:0000318"/>
    <property type="project" value="GO_Central"/>
</dbReference>
<dbReference type="GO" id="GO:0051298">
    <property type="term" value="P:centrosome duplication"/>
    <property type="evidence" value="ECO:0000318"/>
    <property type="project" value="GO_Central"/>
</dbReference>
<dbReference type="CDD" id="cd06488">
    <property type="entry name" value="p23_melusin_like"/>
    <property type="match status" value="1"/>
</dbReference>
<dbReference type="FunFam" id="4.10.1130.20:FF:000001">
    <property type="entry name" value="Cysteine and histidine-rich domain-containing protein 1"/>
    <property type="match status" value="1"/>
</dbReference>
<dbReference type="FunFam" id="4.10.1130.20:FF:000004">
    <property type="entry name" value="integrin beta-1-binding protein 2 isoform X1"/>
    <property type="match status" value="1"/>
</dbReference>
<dbReference type="Gene3D" id="2.60.40.790">
    <property type="match status" value="1"/>
</dbReference>
<dbReference type="Gene3D" id="4.10.1130.20">
    <property type="match status" value="2"/>
</dbReference>
<dbReference type="InterPro" id="IPR007051">
    <property type="entry name" value="CHORD_dom"/>
</dbReference>
<dbReference type="InterPro" id="IPR039790">
    <property type="entry name" value="CHRD1"/>
</dbReference>
<dbReference type="InterPro" id="IPR007052">
    <property type="entry name" value="CS_dom"/>
</dbReference>
<dbReference type="InterPro" id="IPR008978">
    <property type="entry name" value="HSP20-like_chaperone"/>
</dbReference>
<dbReference type="PANTHER" id="PTHR46983">
    <property type="entry name" value="CYSTEINE AND HISTIDINE-RICH DOMAIN-CONTAINING PROTEIN 1"/>
    <property type="match status" value="1"/>
</dbReference>
<dbReference type="PANTHER" id="PTHR46983:SF2">
    <property type="entry name" value="INTEGRIN SUBUNIT BETA 1 BINDING PROTEIN 2"/>
    <property type="match status" value="1"/>
</dbReference>
<dbReference type="Pfam" id="PF04968">
    <property type="entry name" value="CHORD"/>
    <property type="match status" value="2"/>
</dbReference>
<dbReference type="Pfam" id="PF04969">
    <property type="entry name" value="CS"/>
    <property type="match status" value="1"/>
</dbReference>
<dbReference type="SUPFAM" id="SSF49764">
    <property type="entry name" value="HSP20-like chaperones"/>
    <property type="match status" value="1"/>
</dbReference>
<dbReference type="PROSITE" id="PS51401">
    <property type="entry name" value="CHORD"/>
    <property type="match status" value="2"/>
</dbReference>
<dbReference type="PROSITE" id="PS51203">
    <property type="entry name" value="CS"/>
    <property type="match status" value="1"/>
</dbReference>
<protein>
    <recommendedName>
        <fullName>Integrin beta-1-binding protein 2</fullName>
    </recommendedName>
    <alternativeName>
        <fullName>Melusin</fullName>
    </alternativeName>
</protein>
<organism>
    <name type="scientific">Sus scrofa</name>
    <name type="common">Pig</name>
    <dbReference type="NCBI Taxonomy" id="9823"/>
    <lineage>
        <taxon>Eukaryota</taxon>
        <taxon>Metazoa</taxon>
        <taxon>Chordata</taxon>
        <taxon>Craniata</taxon>
        <taxon>Vertebrata</taxon>
        <taxon>Euteleostomi</taxon>
        <taxon>Mammalia</taxon>
        <taxon>Eutheria</taxon>
        <taxon>Laurasiatheria</taxon>
        <taxon>Artiodactyla</taxon>
        <taxon>Suina</taxon>
        <taxon>Suidae</taxon>
        <taxon>Sus</taxon>
    </lineage>
</organism>
<proteinExistence type="evidence at transcript level"/>
<reference key="1">
    <citation type="submission" date="2005-04" db="EMBL/GenBank/DDBJ databases">
        <title>Identification of Sus scrofa gene encoded for integrin beta 1 binding protein (melusin) 2.</title>
        <authorList>
            <person name="Pan G."/>
            <person name="Xiong Z.Y."/>
        </authorList>
    </citation>
    <scope>NUCLEOTIDE SEQUENCE [MRNA]</scope>
</reference>
<name>ITBP2_PIG</name>
<comment type="function">
    <text evidence="1">May play a role during maturation and/or organization of muscles cells.</text>
</comment>
<comment type="subunit">
    <text evidence="1">Interacts with beta-1 integrin subunit. This interaction is regulated by divalent cations, and it occurs only in absence of calcium (By similarity).</text>
</comment>
<comment type="domain">
    <text evidence="1">The tail domain binds to the cytoplasmic domain of both integrin beta-1a and beta-1d isoforms. The presence of Ca(2+) ions does not prevent binding of a fragment consisting of the second cysteine rich repeat and the tail domain but prevents the binding of the full-length protein (By similarity).</text>
</comment>